<organism>
    <name type="scientific">Arctostaphylos uva-ursi</name>
    <name type="common">Bearberry</name>
    <name type="synonym">Arbutus uva-ursi</name>
    <dbReference type="NCBI Taxonomy" id="84009"/>
    <lineage>
        <taxon>Eukaryota</taxon>
        <taxon>Viridiplantae</taxon>
        <taxon>Streptophyta</taxon>
        <taxon>Embryophyta</taxon>
        <taxon>Tracheophyta</taxon>
        <taxon>Spermatophyta</taxon>
        <taxon>Magnoliopsida</taxon>
        <taxon>eudicotyledons</taxon>
        <taxon>Gunneridae</taxon>
        <taxon>Pentapetalae</taxon>
        <taxon>asterids</taxon>
        <taxon>Ericales</taxon>
        <taxon>Ericaceae</taxon>
        <taxon>Arbutoideae</taxon>
        <taxon>Arctostaphylos</taxon>
    </lineage>
</organism>
<keyword id="KW-0150">Chloroplast</keyword>
<keyword id="KW-0507">mRNA processing</keyword>
<keyword id="KW-0934">Plastid</keyword>
<keyword id="KW-0694">RNA-binding</keyword>
<keyword id="KW-0819">tRNA processing</keyword>
<reference key="1">
    <citation type="journal article" date="2002" name="Bot. Rev.">
        <title>A phylogenetic classification of Ericaceae: molecular and morphological evidence.</title>
        <authorList>
            <person name="Kron K.A."/>
            <person name="Judd W.S."/>
            <person name="Stevens P.F."/>
            <person name="Crayn D.M."/>
            <person name="Anderberg A.A."/>
            <person name="Gadek P.A."/>
            <person name="Quinn C.J."/>
            <person name="Luteyn J.L."/>
        </authorList>
    </citation>
    <scope>NUCLEOTIDE SEQUENCE [GENOMIC DNA]</scope>
</reference>
<gene>
    <name evidence="1" type="primary">matK</name>
</gene>
<protein>
    <recommendedName>
        <fullName evidence="1">Maturase K</fullName>
    </recommendedName>
    <alternativeName>
        <fullName evidence="1">Intron maturase</fullName>
    </alternativeName>
</protein>
<feature type="chain" id="PRO_0000143253" description="Maturase K">
    <location>
        <begin position="1"/>
        <end position="506"/>
    </location>
</feature>
<proteinExistence type="inferred from homology"/>
<accession>Q71ML5</accession>
<name>MATK_ARCUU</name>
<evidence type="ECO:0000255" key="1">
    <source>
        <dbReference type="HAMAP-Rule" id="MF_01390"/>
    </source>
</evidence>
<comment type="function">
    <text evidence="1">Usually encoded in the trnK tRNA gene intron. Probably assists in splicing its own and other chloroplast group II introns.</text>
</comment>
<comment type="subcellular location">
    <subcellularLocation>
        <location>Plastid</location>
        <location>Chloroplast</location>
    </subcellularLocation>
</comment>
<comment type="similarity">
    <text evidence="1">Belongs to the intron maturase 2 family. MatK subfamily.</text>
</comment>
<geneLocation type="chloroplast"/>
<sequence>MEEFKRDLELDRSQQHDFIYPLIFQEYIYALAHDRGLNRSIVLENPGYDNKSSLLIVKRLIIHLITQMYQQNHFLFSANDSNKKKIVGYNTNFYSQMIFXGFAVVVEIPFSLXLLSSLEGKEIVKSQNFQSXXXXXXXXXXXXXXXXXXXXXXXXXXXXXXXXXXXXXXXXXXXXXXXXLRFFLHAYHNWNSLMTQKKSSFSFSKKNKRLFLFLYNFHVCEYESIFVFLRNQSSHLRSISSETFLERIYFYRKIELXVFTKDFKAILWVFKXPFLHYVRYQGKSTLASKGTSLLMNKWKYYLVKFWQCYFYMWSQPRRIHINQLSNDSLDFLGYLSSVRLNPLMVRSQMLKNAFLIGNAFXKFDTLVPIIPMIGSLSKAKFGNVLGHPMNXSVWADLSNPDIMDRFXRXFRNLSHYHSGSLKKMSLYRVKYILRLSCARTLARKHKSTVRAFLKRLGVGLLEEFFTEEEQVFYLTFPKASSSSGELYRRRIWYLDIICINELANHS</sequence>
<dbReference type="EMBL" id="AF440411">
    <property type="protein sequence ID" value="AAQ04030.1"/>
    <property type="molecule type" value="Genomic_DNA"/>
</dbReference>
<dbReference type="GO" id="GO:0009507">
    <property type="term" value="C:chloroplast"/>
    <property type="evidence" value="ECO:0007669"/>
    <property type="project" value="UniProtKB-SubCell"/>
</dbReference>
<dbReference type="GO" id="GO:0003723">
    <property type="term" value="F:RNA binding"/>
    <property type="evidence" value="ECO:0007669"/>
    <property type="project" value="UniProtKB-KW"/>
</dbReference>
<dbReference type="GO" id="GO:0006397">
    <property type="term" value="P:mRNA processing"/>
    <property type="evidence" value="ECO:0007669"/>
    <property type="project" value="UniProtKB-KW"/>
</dbReference>
<dbReference type="GO" id="GO:0008380">
    <property type="term" value="P:RNA splicing"/>
    <property type="evidence" value="ECO:0007669"/>
    <property type="project" value="UniProtKB-UniRule"/>
</dbReference>
<dbReference type="GO" id="GO:0008033">
    <property type="term" value="P:tRNA processing"/>
    <property type="evidence" value="ECO:0007669"/>
    <property type="project" value="UniProtKB-KW"/>
</dbReference>
<dbReference type="HAMAP" id="MF_01390">
    <property type="entry name" value="MatK"/>
    <property type="match status" value="1"/>
</dbReference>
<dbReference type="InterPro" id="IPR024937">
    <property type="entry name" value="Domain_X"/>
</dbReference>
<dbReference type="InterPro" id="IPR002866">
    <property type="entry name" value="Maturase_MatK"/>
</dbReference>
<dbReference type="InterPro" id="IPR024942">
    <property type="entry name" value="Maturase_MatK_N"/>
</dbReference>
<dbReference type="PANTHER" id="PTHR34811">
    <property type="entry name" value="MATURASE K"/>
    <property type="match status" value="1"/>
</dbReference>
<dbReference type="PANTHER" id="PTHR34811:SF1">
    <property type="entry name" value="MATURASE K"/>
    <property type="match status" value="1"/>
</dbReference>
<dbReference type="Pfam" id="PF01348">
    <property type="entry name" value="Intron_maturas2"/>
    <property type="match status" value="1"/>
</dbReference>
<dbReference type="Pfam" id="PF01824">
    <property type="entry name" value="MatK_N"/>
    <property type="match status" value="2"/>
</dbReference>